<sequence>MTPLSSADTLTLHGQTFASRVLLGTSRYPSLQSLSDSIAAARPGMVTVALRRQMNAGAAEAGFFELLKRHDVPLLPNTAGCQTIAEAVTTAQMAREVFETDWIKLELIGDDYTLQPDPVGLIEAATLLVKDGFKVLPYCTEDLVIARRLLDAGCEALMPWGAPIGTGKGIVNPYGLRVLRERLPDVPLIVDAGLGVPSHACQVMEWGFDGVLLNTAVSQATHPEIMARAFARGVEAGRAAYLAGPMDARESAHASTPVVGMPFWHQDGSHA</sequence>
<keyword id="KW-0963">Cytoplasm</keyword>
<keyword id="KW-1185">Reference proteome</keyword>
<keyword id="KW-0704">Schiff base</keyword>
<keyword id="KW-0784">Thiamine biosynthesis</keyword>
<keyword id="KW-0808">Transferase</keyword>
<accession>Q63Q73</accession>
<name>THIG_BURPS</name>
<feature type="chain" id="PRO_0000162800" description="Thiazole synthase">
    <location>
        <begin position="1"/>
        <end position="271"/>
    </location>
</feature>
<feature type="active site" description="Schiff-base intermediate with DXP" evidence="1">
    <location>
        <position position="104"/>
    </location>
</feature>
<feature type="binding site" evidence="1">
    <location>
        <position position="165"/>
    </location>
    <ligand>
        <name>1-deoxy-D-xylulose 5-phosphate</name>
        <dbReference type="ChEBI" id="CHEBI:57792"/>
    </ligand>
</feature>
<feature type="binding site" evidence="1">
    <location>
        <begin position="192"/>
        <end position="193"/>
    </location>
    <ligand>
        <name>1-deoxy-D-xylulose 5-phosphate</name>
        <dbReference type="ChEBI" id="CHEBI:57792"/>
    </ligand>
</feature>
<feature type="binding site" evidence="1">
    <location>
        <begin position="214"/>
        <end position="215"/>
    </location>
    <ligand>
        <name>1-deoxy-D-xylulose 5-phosphate</name>
        <dbReference type="ChEBI" id="CHEBI:57792"/>
    </ligand>
</feature>
<comment type="function">
    <text evidence="1">Catalyzes the rearrangement of 1-deoxy-D-xylulose 5-phosphate (DXP) to produce the thiazole phosphate moiety of thiamine. Sulfur is provided by the thiocarboxylate moiety of the carrier protein ThiS. In vitro, sulfur can be provided by H(2)S.</text>
</comment>
<comment type="catalytic activity">
    <reaction evidence="1">
        <text>[ThiS sulfur-carrier protein]-C-terminal-Gly-aminoethanethioate + 2-iminoacetate + 1-deoxy-D-xylulose 5-phosphate = [ThiS sulfur-carrier protein]-C-terminal Gly-Gly + 2-[(2R,5Z)-2-carboxy-4-methylthiazol-5(2H)-ylidene]ethyl phosphate + 2 H2O + H(+)</text>
        <dbReference type="Rhea" id="RHEA:26297"/>
        <dbReference type="Rhea" id="RHEA-COMP:12909"/>
        <dbReference type="Rhea" id="RHEA-COMP:19908"/>
        <dbReference type="ChEBI" id="CHEBI:15377"/>
        <dbReference type="ChEBI" id="CHEBI:15378"/>
        <dbReference type="ChEBI" id="CHEBI:57792"/>
        <dbReference type="ChEBI" id="CHEBI:62899"/>
        <dbReference type="ChEBI" id="CHEBI:77846"/>
        <dbReference type="ChEBI" id="CHEBI:90778"/>
        <dbReference type="ChEBI" id="CHEBI:232372"/>
        <dbReference type="EC" id="2.8.1.10"/>
    </reaction>
</comment>
<comment type="pathway">
    <text evidence="1">Cofactor biosynthesis; thiamine diphosphate biosynthesis.</text>
</comment>
<comment type="subunit">
    <text evidence="1">Homotetramer. Forms heterodimers with either ThiH or ThiS.</text>
</comment>
<comment type="subcellular location">
    <subcellularLocation>
        <location evidence="1">Cytoplasm</location>
    </subcellularLocation>
</comment>
<comment type="similarity">
    <text evidence="1">Belongs to the ThiG family.</text>
</comment>
<reference key="1">
    <citation type="journal article" date="2004" name="Proc. Natl. Acad. Sci. U.S.A.">
        <title>Genomic plasticity of the causative agent of melioidosis, Burkholderia pseudomallei.</title>
        <authorList>
            <person name="Holden M.T.G."/>
            <person name="Titball R.W."/>
            <person name="Peacock S.J."/>
            <person name="Cerdeno-Tarraga A.-M."/>
            <person name="Atkins T."/>
            <person name="Crossman L.C."/>
            <person name="Pitt T."/>
            <person name="Churcher C."/>
            <person name="Mungall K.L."/>
            <person name="Bentley S.D."/>
            <person name="Sebaihia M."/>
            <person name="Thomson N.R."/>
            <person name="Bason N."/>
            <person name="Beacham I.R."/>
            <person name="Brooks K."/>
            <person name="Brown K.A."/>
            <person name="Brown N.F."/>
            <person name="Challis G.L."/>
            <person name="Cherevach I."/>
            <person name="Chillingworth T."/>
            <person name="Cronin A."/>
            <person name="Crossett B."/>
            <person name="Davis P."/>
            <person name="DeShazer D."/>
            <person name="Feltwell T."/>
            <person name="Fraser A."/>
            <person name="Hance Z."/>
            <person name="Hauser H."/>
            <person name="Holroyd S."/>
            <person name="Jagels K."/>
            <person name="Keith K.E."/>
            <person name="Maddison M."/>
            <person name="Moule S."/>
            <person name="Price C."/>
            <person name="Quail M.A."/>
            <person name="Rabbinowitsch E."/>
            <person name="Rutherford K."/>
            <person name="Sanders M."/>
            <person name="Simmonds M."/>
            <person name="Songsivilai S."/>
            <person name="Stevens K."/>
            <person name="Tumapa S."/>
            <person name="Vesaratchavest M."/>
            <person name="Whitehead S."/>
            <person name="Yeats C."/>
            <person name="Barrell B.G."/>
            <person name="Oyston P.C.F."/>
            <person name="Parkhill J."/>
        </authorList>
    </citation>
    <scope>NUCLEOTIDE SEQUENCE [LARGE SCALE GENOMIC DNA]</scope>
    <source>
        <strain>K96243</strain>
    </source>
</reference>
<gene>
    <name evidence="1" type="primary">thiG</name>
    <name type="ordered locus">BPSL3152</name>
</gene>
<protein>
    <recommendedName>
        <fullName evidence="1">Thiazole synthase</fullName>
        <ecNumber evidence="1">2.8.1.10</ecNumber>
    </recommendedName>
</protein>
<proteinExistence type="inferred from homology"/>
<dbReference type="EC" id="2.8.1.10" evidence="1"/>
<dbReference type="EMBL" id="BX571965">
    <property type="protein sequence ID" value="CAH37162.1"/>
    <property type="molecule type" value="Genomic_DNA"/>
</dbReference>
<dbReference type="RefSeq" id="WP_004199935.1">
    <property type="nucleotide sequence ID" value="NZ_CP009538.1"/>
</dbReference>
<dbReference type="RefSeq" id="YP_109745.1">
    <property type="nucleotide sequence ID" value="NC_006350.1"/>
</dbReference>
<dbReference type="SMR" id="Q63Q73"/>
<dbReference type="STRING" id="272560.BPSL3152"/>
<dbReference type="KEGG" id="bps:BPSL3152"/>
<dbReference type="PATRIC" id="fig|272560.51.peg.2091"/>
<dbReference type="eggNOG" id="COG2022">
    <property type="taxonomic scope" value="Bacteria"/>
</dbReference>
<dbReference type="UniPathway" id="UPA00060"/>
<dbReference type="Proteomes" id="UP000000605">
    <property type="component" value="Chromosome 1"/>
</dbReference>
<dbReference type="GO" id="GO:0005737">
    <property type="term" value="C:cytoplasm"/>
    <property type="evidence" value="ECO:0007669"/>
    <property type="project" value="UniProtKB-SubCell"/>
</dbReference>
<dbReference type="GO" id="GO:1990107">
    <property type="term" value="F:thiazole synthase activity"/>
    <property type="evidence" value="ECO:0007669"/>
    <property type="project" value="UniProtKB-EC"/>
</dbReference>
<dbReference type="GO" id="GO:0009229">
    <property type="term" value="P:thiamine diphosphate biosynthetic process"/>
    <property type="evidence" value="ECO:0007669"/>
    <property type="project" value="UniProtKB-UniRule"/>
</dbReference>
<dbReference type="CDD" id="cd04728">
    <property type="entry name" value="ThiG"/>
    <property type="match status" value="1"/>
</dbReference>
<dbReference type="Gene3D" id="3.20.20.70">
    <property type="entry name" value="Aldolase class I"/>
    <property type="match status" value="1"/>
</dbReference>
<dbReference type="HAMAP" id="MF_00443">
    <property type="entry name" value="ThiG"/>
    <property type="match status" value="1"/>
</dbReference>
<dbReference type="InterPro" id="IPR013785">
    <property type="entry name" value="Aldolase_TIM"/>
</dbReference>
<dbReference type="InterPro" id="IPR033983">
    <property type="entry name" value="Thiazole_synthase_ThiG"/>
</dbReference>
<dbReference type="InterPro" id="IPR008867">
    <property type="entry name" value="ThiG"/>
</dbReference>
<dbReference type="PANTHER" id="PTHR34266">
    <property type="entry name" value="THIAZOLE SYNTHASE"/>
    <property type="match status" value="1"/>
</dbReference>
<dbReference type="PANTHER" id="PTHR34266:SF2">
    <property type="entry name" value="THIAZOLE SYNTHASE"/>
    <property type="match status" value="1"/>
</dbReference>
<dbReference type="Pfam" id="PF05690">
    <property type="entry name" value="ThiG"/>
    <property type="match status" value="1"/>
</dbReference>
<dbReference type="SUPFAM" id="SSF110399">
    <property type="entry name" value="ThiG-like"/>
    <property type="match status" value="1"/>
</dbReference>
<organism>
    <name type="scientific">Burkholderia pseudomallei (strain K96243)</name>
    <dbReference type="NCBI Taxonomy" id="272560"/>
    <lineage>
        <taxon>Bacteria</taxon>
        <taxon>Pseudomonadati</taxon>
        <taxon>Pseudomonadota</taxon>
        <taxon>Betaproteobacteria</taxon>
        <taxon>Burkholderiales</taxon>
        <taxon>Burkholderiaceae</taxon>
        <taxon>Burkholderia</taxon>
        <taxon>pseudomallei group</taxon>
    </lineage>
</organism>
<evidence type="ECO:0000255" key="1">
    <source>
        <dbReference type="HAMAP-Rule" id="MF_00443"/>
    </source>
</evidence>